<proteinExistence type="inferred from homology"/>
<reference key="1">
    <citation type="journal article" date="2002" name="Proc. Natl. Acad. Sci. U.S.A.">
        <title>The genome sequence of the facultative intracellular pathogen Brucella melitensis.</title>
        <authorList>
            <person name="DelVecchio V.G."/>
            <person name="Kapatral V."/>
            <person name="Redkar R.J."/>
            <person name="Patra G."/>
            <person name="Mujer C."/>
            <person name="Los T."/>
            <person name="Ivanova N."/>
            <person name="Anderson I."/>
            <person name="Bhattacharyya A."/>
            <person name="Lykidis A."/>
            <person name="Reznik G."/>
            <person name="Jablonski L."/>
            <person name="Larsen N."/>
            <person name="D'Souza M."/>
            <person name="Bernal A."/>
            <person name="Mazur M."/>
            <person name="Goltsman E."/>
            <person name="Selkov E."/>
            <person name="Elzer P.H."/>
            <person name="Hagius S."/>
            <person name="O'Callaghan D."/>
            <person name="Letesson J.-J."/>
            <person name="Haselkorn R."/>
            <person name="Kyrpides N.C."/>
            <person name="Overbeek R."/>
        </authorList>
    </citation>
    <scope>NUCLEOTIDE SEQUENCE [LARGE SCALE GENOMIC DNA]</scope>
    <source>
        <strain>ATCC 23456 / CCUG 17765 / NCTC 10094 / 16M</strain>
    </source>
</reference>
<keyword id="KW-0378">Hydrolase</keyword>
<keyword id="KW-0464">Manganese</keyword>
<protein>
    <recommendedName>
        <fullName evidence="1">Adenine deaminase</fullName>
        <shortName evidence="1">Adenase</shortName>
        <shortName evidence="1">Adenine aminase</shortName>
        <ecNumber evidence="1">3.5.4.2</ecNumber>
    </recommendedName>
</protein>
<sequence>MRHCDSFCELIPMKGCEAILEWMIDQGAGREPADIVLKGGRFLDLITGELVESDIAICEDRIVGTFGTYRGKHEIDVSGRIVVPGFIDTHLHIASSQVTPHEFDRCVLPQGVTTAICDPHEIANVLGAEGIRFFLDSALETVMDIRVQLSSCVPATHMETSGAELLIDDLLPFADHPKVIGLAEFMNFPGVLAKDPECMAKLRAFQGRHIDGHAPLLRGLDLNGYIAAGIRTEHEATNAEEALEKLRKGMYVLVREGSVSKDLKALMPIITERHAQFLALCTDDRNPLDIADQGHLDYLIRTAIAGGVEPLAIYRAASVSAARVFGLFDRGLVAPGQRADLVVVDSLEGCHAEIVLSAGRVVSEALFAARKPVAEVGRNSVKAPRVTASNFRSQSNSGKTRAIGIVPGKIITQNLEFDLKVGPNGVEPDLERDVVKVAVIERHGKNGNIATGFVHGFGLKAGAIASTVSHDSHNICVVGASDEDIATAANRLGEIEGGFVVVRDGKVLAEIPLPIAGLMSTEPYETVREALRKLRHAAEDLGSVLEEPFLQLAFIALPVIPHLKITDRGLVDVDKFEFVGN</sequence>
<dbReference type="EC" id="3.5.4.2" evidence="1"/>
<dbReference type="EMBL" id="AE008918">
    <property type="protein sequence ID" value="AAL53869.1"/>
    <property type="molecule type" value="Genomic_DNA"/>
</dbReference>
<dbReference type="PIR" id="AB3588">
    <property type="entry name" value="AB3588"/>
</dbReference>
<dbReference type="SMR" id="Q8YCA5"/>
<dbReference type="KEGG" id="bme:BMEII0627"/>
<dbReference type="eggNOG" id="COG1001">
    <property type="taxonomic scope" value="Bacteria"/>
</dbReference>
<dbReference type="Proteomes" id="UP000000419">
    <property type="component" value="Chromosome II"/>
</dbReference>
<dbReference type="GO" id="GO:0000034">
    <property type="term" value="F:adenine deaminase activity"/>
    <property type="evidence" value="ECO:0007669"/>
    <property type="project" value="UniProtKB-UniRule"/>
</dbReference>
<dbReference type="GO" id="GO:0006146">
    <property type="term" value="P:adenine catabolic process"/>
    <property type="evidence" value="ECO:0007669"/>
    <property type="project" value="InterPro"/>
</dbReference>
<dbReference type="CDD" id="cd01295">
    <property type="entry name" value="AdeC"/>
    <property type="match status" value="1"/>
</dbReference>
<dbReference type="Gene3D" id="3.20.20.140">
    <property type="entry name" value="Metal-dependent hydrolases"/>
    <property type="match status" value="1"/>
</dbReference>
<dbReference type="Gene3D" id="2.30.40.10">
    <property type="entry name" value="Urease, subunit C, domain 1"/>
    <property type="match status" value="1"/>
</dbReference>
<dbReference type="HAMAP" id="MF_01518">
    <property type="entry name" value="Adenine_deamin"/>
    <property type="match status" value="1"/>
</dbReference>
<dbReference type="InterPro" id="IPR006679">
    <property type="entry name" value="Adenine_deam"/>
</dbReference>
<dbReference type="InterPro" id="IPR026912">
    <property type="entry name" value="Adenine_deam_C"/>
</dbReference>
<dbReference type="InterPro" id="IPR006680">
    <property type="entry name" value="Amidohydro-rel"/>
</dbReference>
<dbReference type="InterPro" id="IPR011059">
    <property type="entry name" value="Metal-dep_hydrolase_composite"/>
</dbReference>
<dbReference type="InterPro" id="IPR032466">
    <property type="entry name" value="Metal_Hydrolase"/>
</dbReference>
<dbReference type="NCBIfam" id="TIGR01178">
    <property type="entry name" value="ade"/>
    <property type="match status" value="1"/>
</dbReference>
<dbReference type="PANTHER" id="PTHR11113:SF2">
    <property type="entry name" value="ADENINE DEAMINASE"/>
    <property type="match status" value="1"/>
</dbReference>
<dbReference type="PANTHER" id="PTHR11113">
    <property type="entry name" value="N-ACETYLGLUCOSAMINE-6-PHOSPHATE DEACETYLASE"/>
    <property type="match status" value="1"/>
</dbReference>
<dbReference type="Pfam" id="PF13382">
    <property type="entry name" value="Adenine_deam_C"/>
    <property type="match status" value="1"/>
</dbReference>
<dbReference type="Pfam" id="PF01979">
    <property type="entry name" value="Amidohydro_1"/>
    <property type="match status" value="1"/>
</dbReference>
<dbReference type="SUPFAM" id="SSF51338">
    <property type="entry name" value="Composite domain of metallo-dependent hydrolases"/>
    <property type="match status" value="1"/>
</dbReference>
<dbReference type="SUPFAM" id="SSF51556">
    <property type="entry name" value="Metallo-dependent hydrolases"/>
    <property type="match status" value="1"/>
</dbReference>
<name>ADEC_BRUME</name>
<organism>
    <name type="scientific">Brucella melitensis biotype 1 (strain ATCC 23456 / CCUG 17765 / NCTC 10094 / 16M)</name>
    <dbReference type="NCBI Taxonomy" id="224914"/>
    <lineage>
        <taxon>Bacteria</taxon>
        <taxon>Pseudomonadati</taxon>
        <taxon>Pseudomonadota</taxon>
        <taxon>Alphaproteobacteria</taxon>
        <taxon>Hyphomicrobiales</taxon>
        <taxon>Brucellaceae</taxon>
        <taxon>Brucella/Ochrobactrum group</taxon>
        <taxon>Brucella</taxon>
    </lineage>
</organism>
<comment type="catalytic activity">
    <reaction evidence="1">
        <text>adenine + H2O + H(+) = hypoxanthine + NH4(+)</text>
        <dbReference type="Rhea" id="RHEA:23688"/>
        <dbReference type="ChEBI" id="CHEBI:15377"/>
        <dbReference type="ChEBI" id="CHEBI:15378"/>
        <dbReference type="ChEBI" id="CHEBI:16708"/>
        <dbReference type="ChEBI" id="CHEBI:17368"/>
        <dbReference type="ChEBI" id="CHEBI:28938"/>
        <dbReference type="EC" id="3.5.4.2"/>
    </reaction>
</comment>
<comment type="cofactor">
    <cofactor evidence="1">
        <name>Mn(2+)</name>
        <dbReference type="ChEBI" id="CHEBI:29035"/>
    </cofactor>
</comment>
<comment type="similarity">
    <text evidence="1">Belongs to the metallo-dependent hydrolases superfamily. Adenine deaminase family.</text>
</comment>
<accession>Q8YCA5</accession>
<evidence type="ECO:0000255" key="1">
    <source>
        <dbReference type="HAMAP-Rule" id="MF_01518"/>
    </source>
</evidence>
<feature type="chain" id="PRO_0000142410" description="Adenine deaminase">
    <location>
        <begin position="1"/>
        <end position="581"/>
    </location>
</feature>
<gene>
    <name evidence="1" type="primary">ade</name>
    <name type="ordered locus">BMEII0627</name>
</gene>